<gene>
    <name evidence="1" type="primary">rplS</name>
    <name evidence="1" type="synonym">rpl19</name>
    <name type="ordered locus">PMT9312_0475</name>
</gene>
<evidence type="ECO:0000255" key="1">
    <source>
        <dbReference type="HAMAP-Rule" id="MF_00402"/>
    </source>
</evidence>
<evidence type="ECO:0000305" key="2"/>
<protein>
    <recommendedName>
        <fullName evidence="1">Large ribosomal subunit protein bL19</fullName>
    </recommendedName>
    <alternativeName>
        <fullName evidence="2">50S ribosomal protein L19</fullName>
    </alternativeName>
</protein>
<feature type="chain" id="PRO_0000252527" description="Large ribosomal subunit protein bL19">
    <location>
        <begin position="1"/>
        <end position="126"/>
    </location>
</feature>
<dbReference type="EMBL" id="CP000111">
    <property type="protein sequence ID" value="ABB49536.1"/>
    <property type="status" value="ALT_INIT"/>
    <property type="molecule type" value="Genomic_DNA"/>
</dbReference>
<dbReference type="RefSeq" id="WP_011376034.1">
    <property type="nucleotide sequence ID" value="NC_007577.1"/>
</dbReference>
<dbReference type="SMR" id="Q31C59"/>
<dbReference type="STRING" id="74546.PMT9312_0475"/>
<dbReference type="KEGG" id="pmi:PMT9312_0475"/>
<dbReference type="eggNOG" id="COG0335">
    <property type="taxonomic scope" value="Bacteria"/>
</dbReference>
<dbReference type="HOGENOM" id="CLU_103507_2_0_3"/>
<dbReference type="OrthoDB" id="9803541at2"/>
<dbReference type="Proteomes" id="UP000002715">
    <property type="component" value="Chromosome"/>
</dbReference>
<dbReference type="GO" id="GO:0022625">
    <property type="term" value="C:cytosolic large ribosomal subunit"/>
    <property type="evidence" value="ECO:0007669"/>
    <property type="project" value="TreeGrafter"/>
</dbReference>
<dbReference type="GO" id="GO:0003735">
    <property type="term" value="F:structural constituent of ribosome"/>
    <property type="evidence" value="ECO:0007669"/>
    <property type="project" value="InterPro"/>
</dbReference>
<dbReference type="GO" id="GO:0006412">
    <property type="term" value="P:translation"/>
    <property type="evidence" value="ECO:0007669"/>
    <property type="project" value="UniProtKB-UniRule"/>
</dbReference>
<dbReference type="FunFam" id="2.30.30.790:FF:000001">
    <property type="entry name" value="50S ribosomal protein L19"/>
    <property type="match status" value="1"/>
</dbReference>
<dbReference type="Gene3D" id="2.30.30.790">
    <property type="match status" value="1"/>
</dbReference>
<dbReference type="HAMAP" id="MF_00402">
    <property type="entry name" value="Ribosomal_bL19"/>
    <property type="match status" value="1"/>
</dbReference>
<dbReference type="InterPro" id="IPR001857">
    <property type="entry name" value="Ribosomal_bL19"/>
</dbReference>
<dbReference type="InterPro" id="IPR018257">
    <property type="entry name" value="Ribosomal_bL19_CS"/>
</dbReference>
<dbReference type="InterPro" id="IPR038657">
    <property type="entry name" value="Ribosomal_bL19_sf"/>
</dbReference>
<dbReference type="InterPro" id="IPR008991">
    <property type="entry name" value="Translation_prot_SH3-like_sf"/>
</dbReference>
<dbReference type="NCBIfam" id="TIGR01024">
    <property type="entry name" value="rplS_bact"/>
    <property type="match status" value="1"/>
</dbReference>
<dbReference type="PANTHER" id="PTHR15680:SF9">
    <property type="entry name" value="LARGE RIBOSOMAL SUBUNIT PROTEIN BL19M"/>
    <property type="match status" value="1"/>
</dbReference>
<dbReference type="PANTHER" id="PTHR15680">
    <property type="entry name" value="RIBOSOMAL PROTEIN L19"/>
    <property type="match status" value="1"/>
</dbReference>
<dbReference type="Pfam" id="PF01245">
    <property type="entry name" value="Ribosomal_L19"/>
    <property type="match status" value="1"/>
</dbReference>
<dbReference type="PIRSF" id="PIRSF002191">
    <property type="entry name" value="Ribosomal_L19"/>
    <property type="match status" value="1"/>
</dbReference>
<dbReference type="PRINTS" id="PR00061">
    <property type="entry name" value="RIBOSOMALL19"/>
</dbReference>
<dbReference type="SUPFAM" id="SSF50104">
    <property type="entry name" value="Translation proteins SH3-like domain"/>
    <property type="match status" value="1"/>
</dbReference>
<dbReference type="PROSITE" id="PS01015">
    <property type="entry name" value="RIBOSOMAL_L19"/>
    <property type="match status" value="1"/>
</dbReference>
<reference key="1">
    <citation type="journal article" date="2006" name="Science">
        <title>Genomic islands and the ecology and evolution of Prochlorococcus.</title>
        <authorList>
            <person name="Coleman M.L."/>
            <person name="Sullivan M.B."/>
            <person name="Martiny A.C."/>
            <person name="Steglich C."/>
            <person name="Barry K."/>
            <person name="Delong E.F."/>
            <person name="Chisholm S.W."/>
        </authorList>
    </citation>
    <scope>NUCLEOTIDE SEQUENCE [LARGE SCALE GENOMIC DNA]</scope>
    <source>
        <strain>MIT 9312</strain>
    </source>
</reference>
<organism>
    <name type="scientific">Prochlorococcus marinus (strain MIT 9312)</name>
    <dbReference type="NCBI Taxonomy" id="74546"/>
    <lineage>
        <taxon>Bacteria</taxon>
        <taxon>Bacillati</taxon>
        <taxon>Cyanobacteriota</taxon>
        <taxon>Cyanophyceae</taxon>
        <taxon>Synechococcales</taxon>
        <taxon>Prochlorococcaceae</taxon>
        <taxon>Prochlorococcus</taxon>
    </lineage>
</organism>
<proteinExistence type="inferred from homology"/>
<sequence length="126" mass="14562">MVSETTKTISVSNLIEEFENEQLKKELPEIYVGDTVKVGVRITEGNKERVQPYEGVVIAKRHGGIHQTITVRRIFQGIGVERVFMLHSPQVASLKVERRGKVRRAKLFYLRDRVGKATRVKQRFDR</sequence>
<accession>Q31C59</accession>
<keyword id="KW-0687">Ribonucleoprotein</keyword>
<keyword id="KW-0689">Ribosomal protein</keyword>
<comment type="function">
    <text evidence="1">This protein is located at the 30S-50S ribosomal subunit interface and may play a role in the structure and function of the aminoacyl-tRNA binding site.</text>
</comment>
<comment type="similarity">
    <text evidence="1">Belongs to the bacterial ribosomal protein bL19 family.</text>
</comment>
<comment type="sequence caution" evidence="2">
    <conflict type="erroneous initiation">
        <sequence resource="EMBL-CDS" id="ABB49536"/>
    </conflict>
</comment>
<name>RL19_PROM9</name>